<dbReference type="EC" id="2.1.1.61" evidence="1"/>
<dbReference type="EC" id="1.5.-.-" evidence="1"/>
<dbReference type="EMBL" id="CP000436">
    <property type="protein sequence ID" value="ABI24941.1"/>
    <property type="molecule type" value="Genomic_DNA"/>
</dbReference>
<dbReference type="SMR" id="Q0I2W9"/>
<dbReference type="KEGG" id="hso:HS_0664"/>
<dbReference type="eggNOG" id="COG0665">
    <property type="taxonomic scope" value="Bacteria"/>
</dbReference>
<dbReference type="eggNOG" id="COG4121">
    <property type="taxonomic scope" value="Bacteria"/>
</dbReference>
<dbReference type="HOGENOM" id="CLU_022427_2_1_6"/>
<dbReference type="GO" id="GO:0005737">
    <property type="term" value="C:cytoplasm"/>
    <property type="evidence" value="ECO:0007669"/>
    <property type="project" value="UniProtKB-SubCell"/>
</dbReference>
<dbReference type="GO" id="GO:0050660">
    <property type="term" value="F:flavin adenine dinucleotide binding"/>
    <property type="evidence" value="ECO:0007669"/>
    <property type="project" value="UniProtKB-UniRule"/>
</dbReference>
<dbReference type="GO" id="GO:0016645">
    <property type="term" value="F:oxidoreductase activity, acting on the CH-NH group of donors"/>
    <property type="evidence" value="ECO:0007669"/>
    <property type="project" value="InterPro"/>
</dbReference>
<dbReference type="GO" id="GO:0004808">
    <property type="term" value="F:tRNA (5-methylaminomethyl-2-thiouridylate)(34)-methyltransferase activity"/>
    <property type="evidence" value="ECO:0007669"/>
    <property type="project" value="UniProtKB-EC"/>
</dbReference>
<dbReference type="GO" id="GO:0032259">
    <property type="term" value="P:methylation"/>
    <property type="evidence" value="ECO:0007669"/>
    <property type="project" value="UniProtKB-KW"/>
</dbReference>
<dbReference type="GO" id="GO:0002098">
    <property type="term" value="P:tRNA wobble uridine modification"/>
    <property type="evidence" value="ECO:0007669"/>
    <property type="project" value="TreeGrafter"/>
</dbReference>
<dbReference type="Gene3D" id="3.30.9.10">
    <property type="entry name" value="D-Amino Acid Oxidase, subunit A, domain 2"/>
    <property type="match status" value="1"/>
</dbReference>
<dbReference type="Gene3D" id="3.50.50.60">
    <property type="entry name" value="FAD/NAD(P)-binding domain"/>
    <property type="match status" value="1"/>
</dbReference>
<dbReference type="Gene3D" id="3.40.50.150">
    <property type="entry name" value="Vaccinia Virus protein VP39"/>
    <property type="match status" value="1"/>
</dbReference>
<dbReference type="HAMAP" id="MF_01102">
    <property type="entry name" value="MnmC"/>
    <property type="match status" value="1"/>
</dbReference>
<dbReference type="InterPro" id="IPR006076">
    <property type="entry name" value="FAD-dep_OxRdtase"/>
</dbReference>
<dbReference type="InterPro" id="IPR036188">
    <property type="entry name" value="FAD/NAD-bd_sf"/>
</dbReference>
<dbReference type="InterPro" id="IPR008471">
    <property type="entry name" value="MnmC-like_methylTransf"/>
</dbReference>
<dbReference type="InterPro" id="IPR029063">
    <property type="entry name" value="SAM-dependent_MTases_sf"/>
</dbReference>
<dbReference type="InterPro" id="IPR023032">
    <property type="entry name" value="tRNA_MAMT_biosynth_bifunc_MnmC"/>
</dbReference>
<dbReference type="InterPro" id="IPR047785">
    <property type="entry name" value="tRNA_MNMC2"/>
</dbReference>
<dbReference type="InterPro" id="IPR017610">
    <property type="entry name" value="tRNA_S-uridine_synth_MnmC_C"/>
</dbReference>
<dbReference type="NCBIfam" id="TIGR03197">
    <property type="entry name" value="MnmC_Cterm"/>
    <property type="match status" value="1"/>
</dbReference>
<dbReference type="NCBIfam" id="NF002481">
    <property type="entry name" value="PRK01747.1-2"/>
    <property type="match status" value="1"/>
</dbReference>
<dbReference type="NCBIfam" id="NF002484">
    <property type="entry name" value="PRK01747.1-5"/>
    <property type="match status" value="1"/>
</dbReference>
<dbReference type="NCBIfam" id="NF033855">
    <property type="entry name" value="tRNA_MNMC2"/>
    <property type="match status" value="1"/>
</dbReference>
<dbReference type="PANTHER" id="PTHR13847">
    <property type="entry name" value="SARCOSINE DEHYDROGENASE-RELATED"/>
    <property type="match status" value="1"/>
</dbReference>
<dbReference type="PANTHER" id="PTHR13847:SF283">
    <property type="entry name" value="TRNA 5-METHYLAMINOMETHYL-2-THIOURIDINE BIOSYNTHESIS BIFUNCTIONAL PROTEIN MNMC"/>
    <property type="match status" value="1"/>
</dbReference>
<dbReference type="Pfam" id="PF01266">
    <property type="entry name" value="DAO"/>
    <property type="match status" value="1"/>
</dbReference>
<dbReference type="Pfam" id="PF05430">
    <property type="entry name" value="Methyltransf_30"/>
    <property type="match status" value="1"/>
</dbReference>
<dbReference type="SUPFAM" id="SSF51905">
    <property type="entry name" value="FAD/NAD(P)-binding domain"/>
    <property type="match status" value="1"/>
</dbReference>
<evidence type="ECO:0000255" key="1">
    <source>
        <dbReference type="HAMAP-Rule" id="MF_01102"/>
    </source>
</evidence>
<protein>
    <recommendedName>
        <fullName evidence="1">tRNA 5-methylaminomethyl-2-thiouridine biosynthesis bifunctional protein MnmC</fullName>
        <shortName evidence="1">tRNA mnm(5)s(2)U biosynthesis bifunctional protein</shortName>
    </recommendedName>
    <domain>
        <recommendedName>
            <fullName evidence="1">tRNA (mnm(5)s(2)U34)-methyltransferase</fullName>
            <ecNumber evidence="1">2.1.1.61</ecNumber>
        </recommendedName>
    </domain>
    <domain>
        <recommendedName>
            <fullName evidence="1">FAD-dependent cmnm(5)s(2)U34 oxidoreductase</fullName>
            <ecNumber evidence="1">1.5.-.-</ecNumber>
        </recommendedName>
    </domain>
</protein>
<accession>Q0I2W9</accession>
<feature type="chain" id="PRO_1000064999" description="tRNA 5-methylaminomethyl-2-thiouridine biosynthesis bifunctional protein MnmC">
    <location>
        <begin position="1"/>
        <end position="676"/>
    </location>
</feature>
<feature type="region of interest" description="tRNA (mnm(5)s(2)U34)-methyltransferase">
    <location>
        <begin position="1"/>
        <end position="241"/>
    </location>
</feature>
<feature type="region of interest" description="FAD-dependent cmnm(5)s(2)U34 oxidoreductase">
    <location>
        <begin position="268"/>
        <end position="676"/>
    </location>
</feature>
<keyword id="KW-0963">Cytoplasm</keyword>
<keyword id="KW-0274">FAD</keyword>
<keyword id="KW-0285">Flavoprotein</keyword>
<keyword id="KW-0489">Methyltransferase</keyword>
<keyword id="KW-0511">Multifunctional enzyme</keyword>
<keyword id="KW-0560">Oxidoreductase</keyword>
<keyword id="KW-0949">S-adenosyl-L-methionine</keyword>
<keyword id="KW-0808">Transferase</keyword>
<keyword id="KW-0819">tRNA processing</keyword>
<comment type="function">
    <text evidence="1">Catalyzes the last two steps in the biosynthesis of 5-methylaminomethyl-2-thiouridine (mnm(5)s(2)U) at the wobble position (U34) in tRNA. Catalyzes the FAD-dependent demodification of cmnm(5)s(2)U34 to nm(5)s(2)U34, followed by the transfer of a methyl group from S-adenosyl-L-methionine to nm(5)s(2)U34, to form mnm(5)s(2)U34.</text>
</comment>
<comment type="catalytic activity">
    <reaction evidence="1">
        <text>5-aminomethyl-2-thiouridine(34) in tRNA + S-adenosyl-L-methionine = 5-methylaminomethyl-2-thiouridine(34) in tRNA + S-adenosyl-L-homocysteine + H(+)</text>
        <dbReference type="Rhea" id="RHEA:19569"/>
        <dbReference type="Rhea" id="RHEA-COMP:10195"/>
        <dbReference type="Rhea" id="RHEA-COMP:10197"/>
        <dbReference type="ChEBI" id="CHEBI:15378"/>
        <dbReference type="ChEBI" id="CHEBI:57856"/>
        <dbReference type="ChEBI" id="CHEBI:59789"/>
        <dbReference type="ChEBI" id="CHEBI:74454"/>
        <dbReference type="ChEBI" id="CHEBI:74455"/>
        <dbReference type="EC" id="2.1.1.61"/>
    </reaction>
</comment>
<comment type="cofactor">
    <cofactor evidence="1">
        <name>FAD</name>
        <dbReference type="ChEBI" id="CHEBI:57692"/>
    </cofactor>
</comment>
<comment type="subcellular location">
    <subcellularLocation>
        <location evidence="1">Cytoplasm</location>
    </subcellularLocation>
</comment>
<comment type="similarity">
    <text evidence="1">In the N-terminal section; belongs to the methyltransferase superfamily. tRNA (mnm(5)s(2)U34)-methyltransferase family.</text>
</comment>
<comment type="similarity">
    <text evidence="1">In the C-terminal section; belongs to the DAO family.</text>
</comment>
<proteinExistence type="inferred from homology"/>
<name>MNMC_HISS1</name>
<organism>
    <name type="scientific">Histophilus somni (strain 129Pt)</name>
    <name type="common">Haemophilus somnus</name>
    <dbReference type="NCBI Taxonomy" id="205914"/>
    <lineage>
        <taxon>Bacteria</taxon>
        <taxon>Pseudomonadati</taxon>
        <taxon>Pseudomonadota</taxon>
        <taxon>Gammaproteobacteria</taxon>
        <taxon>Pasteurellales</taxon>
        <taxon>Pasteurellaceae</taxon>
        <taxon>Histophilus</taxon>
    </lineage>
</organism>
<gene>
    <name evidence="1" type="primary">mnmC</name>
    <name type="ordered locus">HS_0664</name>
</gene>
<sequence>MFTVTPAKIYLNQEKTPVSEQFNDVYFSNQDGLAESEYVFQQGNHLWERWIVYQEKHFVIAETGFGTGLNFLAVTSLFRQFRQQYPDFPLKRLFFISFEKYPLPKDQLQQIHRLYPQFSALSQQLCDYCLDAIQGCQRFHFAETTLDLWFGDIADNLPQLGDYMQNRIDAWFLDGFSPSKNPQMWNDKLYQQIFYYSKPQGTFATFTAASAVRKGLISAGFEVQKRKGYGKKRECLCGIKNSTQQQNAKFPWYLNQPASLLSEDIAIIGGGIASLFTALSLLKRGAKVTLYCEDEQLALNASGNKQGAFYPQLSDDDDRNIRFYVHAFFYALQQLQWAIKQGIEFEHEFCGVALCAYDHKSAVKLAKISSYQWSKSLYQNLNKEQLSEKIGLPLDCAGGFIPQGAWLAPRQFVQNAFSYLQQLGLEIKTSQKITALDYRNLQWVLTNEQNETFNHQVVVLANGYQITDFVQTAKLPLYPVRGQVSQIPTSANLLKLKSVLCYDGYLTPADKMKQSHCLGASHIRNNKDRHFSHQEQRENQQKIQQNLASTDTDKNMDWLQDIDISANIARIGVRCSVRDRVPIMGNVPHFEQQCLDYRNIFNLRRRKQPIPDAAQWKNLYLIGALGSRGLTSAALLGETLASLIYAEPLPLSEDILHNLSPNRSWIRKLLKGTEIK</sequence>
<reference key="1">
    <citation type="journal article" date="2007" name="J. Bacteriol.">
        <title>Complete genome sequence of Haemophilus somnus (Histophilus somni) strain 129Pt and comparison to Haemophilus ducreyi 35000HP and Haemophilus influenzae Rd.</title>
        <authorList>
            <person name="Challacombe J.F."/>
            <person name="Duncan A.J."/>
            <person name="Brettin T.S."/>
            <person name="Bruce D."/>
            <person name="Chertkov O."/>
            <person name="Detter J.C."/>
            <person name="Han C.S."/>
            <person name="Misra M."/>
            <person name="Richardson P."/>
            <person name="Tapia R."/>
            <person name="Thayer N."/>
            <person name="Xie G."/>
            <person name="Inzana T.J."/>
        </authorList>
    </citation>
    <scope>NUCLEOTIDE SEQUENCE [LARGE SCALE GENOMIC DNA]</scope>
    <source>
        <strain>129Pt</strain>
    </source>
</reference>